<accession>Q06J39</accession>
<feature type="chain" id="PRO_0000296912" description="DNA-directed RNA polymerase subunit alpha">
    <location>
        <begin position="1"/>
        <end position="358"/>
    </location>
</feature>
<feature type="region of interest" description="Alpha N-terminal domain (alpha-NTD)" evidence="1">
    <location>
        <begin position="1"/>
        <end position="244"/>
    </location>
</feature>
<feature type="region of interest" description="Alpha C-terminal domain (alpha-CTD)" evidence="1">
    <location>
        <begin position="287"/>
        <end position="358"/>
    </location>
</feature>
<protein>
    <recommendedName>
        <fullName>DNA-directed RNA polymerase subunit alpha</fullName>
        <shortName>RNAP subunit alpha</shortName>
        <ecNumber>2.7.7.6</ecNumber>
    </recommendedName>
    <alternativeName>
        <fullName>RNA polymerase subunit alpha</fullName>
    </alternativeName>
    <alternativeName>
        <fullName>Transcriptase subunit alpha</fullName>
    </alternativeName>
</protein>
<reference key="1">
    <citation type="journal article" date="2007" name="Mol. Biol. Evol.">
        <title>The complete chloroplast genome of the chlorarachniophyte Bigelowiella natans: evidence for independent origins of chlorarachniophyte and euglenid secondary endosymbionts.</title>
        <authorList>
            <person name="Rogers M.B."/>
            <person name="Gilson P.R."/>
            <person name="Su V."/>
            <person name="McFadden G.I."/>
            <person name="Keeling P.J."/>
        </authorList>
    </citation>
    <scope>NUCLEOTIDE SEQUENCE [LARGE SCALE GENOMIC DNA]</scope>
</reference>
<evidence type="ECO:0000250" key="1"/>
<evidence type="ECO:0000305" key="2"/>
<proteinExistence type="inferred from homology"/>
<name>RPOA_BIGNA</name>
<dbReference type="EC" id="2.7.7.6"/>
<dbReference type="EMBL" id="DQ851108">
    <property type="protein sequence ID" value="ABG91420.1"/>
    <property type="molecule type" value="Genomic_DNA"/>
</dbReference>
<dbReference type="RefSeq" id="YP_778588.1">
    <property type="nucleotide sequence ID" value="NC_008408.1"/>
</dbReference>
<dbReference type="SMR" id="Q06J39"/>
<dbReference type="GeneID" id="4353005"/>
<dbReference type="GO" id="GO:0009507">
    <property type="term" value="C:chloroplast"/>
    <property type="evidence" value="ECO:0007669"/>
    <property type="project" value="UniProtKB-SubCell"/>
</dbReference>
<dbReference type="GO" id="GO:0000428">
    <property type="term" value="C:DNA-directed RNA polymerase complex"/>
    <property type="evidence" value="ECO:0007669"/>
    <property type="project" value="UniProtKB-KW"/>
</dbReference>
<dbReference type="GO" id="GO:0005739">
    <property type="term" value="C:mitochondrion"/>
    <property type="evidence" value="ECO:0007669"/>
    <property type="project" value="GOC"/>
</dbReference>
<dbReference type="GO" id="GO:0003677">
    <property type="term" value="F:DNA binding"/>
    <property type="evidence" value="ECO:0007669"/>
    <property type="project" value="InterPro"/>
</dbReference>
<dbReference type="GO" id="GO:0003899">
    <property type="term" value="F:DNA-directed RNA polymerase activity"/>
    <property type="evidence" value="ECO:0007669"/>
    <property type="project" value="UniProtKB-EC"/>
</dbReference>
<dbReference type="GO" id="GO:0046983">
    <property type="term" value="F:protein dimerization activity"/>
    <property type="evidence" value="ECO:0007669"/>
    <property type="project" value="InterPro"/>
</dbReference>
<dbReference type="GO" id="GO:0006351">
    <property type="term" value="P:DNA-templated transcription"/>
    <property type="evidence" value="ECO:0007669"/>
    <property type="project" value="InterPro"/>
</dbReference>
<dbReference type="CDD" id="cd06928">
    <property type="entry name" value="RNAP_alpha_NTD"/>
    <property type="match status" value="1"/>
</dbReference>
<dbReference type="Gene3D" id="1.10.150.20">
    <property type="entry name" value="5' to 3' exonuclease, C-terminal subdomain"/>
    <property type="match status" value="1"/>
</dbReference>
<dbReference type="Gene3D" id="2.170.120.12">
    <property type="entry name" value="DNA-directed RNA polymerase, insert domain"/>
    <property type="match status" value="1"/>
</dbReference>
<dbReference type="Gene3D" id="3.30.1360.10">
    <property type="entry name" value="RNA polymerase, RBP11-like subunit"/>
    <property type="match status" value="1"/>
</dbReference>
<dbReference type="InterPro" id="IPR011262">
    <property type="entry name" value="DNA-dir_RNA_pol_insert"/>
</dbReference>
<dbReference type="InterPro" id="IPR011263">
    <property type="entry name" value="DNA-dir_RNA_pol_RpoA/D/Rpb3"/>
</dbReference>
<dbReference type="InterPro" id="IPR036603">
    <property type="entry name" value="RBP11-like"/>
</dbReference>
<dbReference type="InterPro" id="IPR011260">
    <property type="entry name" value="RNAP_asu_C"/>
</dbReference>
<dbReference type="InterPro" id="IPR036643">
    <property type="entry name" value="RNApol_insert_sf"/>
</dbReference>
<dbReference type="Pfam" id="PF01000">
    <property type="entry name" value="RNA_pol_A_bac"/>
    <property type="match status" value="1"/>
</dbReference>
<dbReference type="Pfam" id="PF03118">
    <property type="entry name" value="RNA_pol_A_CTD"/>
    <property type="match status" value="1"/>
</dbReference>
<dbReference type="Pfam" id="PF01193">
    <property type="entry name" value="RNA_pol_L"/>
    <property type="match status" value="1"/>
</dbReference>
<dbReference type="SMART" id="SM00662">
    <property type="entry name" value="RPOLD"/>
    <property type="match status" value="1"/>
</dbReference>
<dbReference type="SUPFAM" id="SSF47789">
    <property type="entry name" value="C-terminal domain of RNA polymerase alpha subunit"/>
    <property type="match status" value="1"/>
</dbReference>
<dbReference type="SUPFAM" id="SSF56553">
    <property type="entry name" value="Insert subdomain of RNA polymerase alpha subunit"/>
    <property type="match status" value="1"/>
</dbReference>
<dbReference type="SUPFAM" id="SSF55257">
    <property type="entry name" value="RBP11-like subunits of RNA polymerase"/>
    <property type="match status" value="1"/>
</dbReference>
<sequence length="358" mass="41666">MENKLFSCIESRLRGKRNYYSRFYIGPFLKNQAFLYSNVLRRVLLSDSSNIVITAVNIVGAKHEYSLLPGVRESSLDLLLNLKELVFVKDIYTKFNKSYFAYLKSNGPKIIRCSDIILPNTIYAVDSTQYIATISNNKSLILKMKLTANLLNNFYSNLNYELNSLLSYYTNDILEKTNFSLIIDPNFSCVNKVNSSLISLDNLENYNDSISLEVWTNSSYSPRIIIQNSIKSMVNLFLSIYDTSFIDIKLENSDNFLENHLVSLSNRATFFKKSFFNICTEFNTVKYKTSFDKNLTLISIDELDLSIYSKFLLKRHNILTLYDLFKIDKRVLERFYNISYKTLQSIERKMVKYGTVNK</sequence>
<organism>
    <name type="scientific">Bigelowiella natans</name>
    <name type="common">Pedinomonas minutissima</name>
    <name type="synonym">Chlorarachnion sp. (strain CCMP621)</name>
    <dbReference type="NCBI Taxonomy" id="227086"/>
    <lineage>
        <taxon>Eukaryota</taxon>
        <taxon>Sar</taxon>
        <taxon>Rhizaria</taxon>
        <taxon>Cercozoa</taxon>
        <taxon>Chlorarachniophyceae</taxon>
        <taxon>Bigelowiella</taxon>
    </lineage>
</organism>
<comment type="function">
    <text evidence="1">DNA-dependent RNA polymerase catalyzes the transcription of DNA into RNA using the four ribonucleoside triphosphates as substrates.</text>
</comment>
<comment type="catalytic activity">
    <reaction>
        <text>RNA(n) + a ribonucleoside 5'-triphosphate = RNA(n+1) + diphosphate</text>
        <dbReference type="Rhea" id="RHEA:21248"/>
        <dbReference type="Rhea" id="RHEA-COMP:14527"/>
        <dbReference type="Rhea" id="RHEA-COMP:17342"/>
        <dbReference type="ChEBI" id="CHEBI:33019"/>
        <dbReference type="ChEBI" id="CHEBI:61557"/>
        <dbReference type="ChEBI" id="CHEBI:140395"/>
        <dbReference type="EC" id="2.7.7.6"/>
    </reaction>
</comment>
<comment type="subunit">
    <text evidence="1">Homodimer. The RNAP catalytic core consists of 2 alpha, 1 beta, 1 beta' and 1 omega subunit. When a sigma factor is associated with the core the holoenzyme is formed, which can initiate transcription (By similarity).</text>
</comment>
<comment type="subcellular location">
    <subcellularLocation>
        <location>Plastid</location>
        <location>Chloroplast</location>
    </subcellularLocation>
</comment>
<comment type="domain">
    <text evidence="1">The N-terminal domain is essential for RNAP assembly and basal transcription, whereas the C-terminal domain is involved in interaction with transcriptional regulators and with upstream promoter elements.</text>
</comment>
<comment type="similarity">
    <text evidence="2">Belongs to the RNA polymerase alpha chain family.</text>
</comment>
<gene>
    <name type="primary">rpoA</name>
</gene>
<geneLocation type="chloroplast"/>
<keyword id="KW-0150">Chloroplast</keyword>
<keyword id="KW-0240">DNA-directed RNA polymerase</keyword>
<keyword id="KW-0548">Nucleotidyltransferase</keyword>
<keyword id="KW-0934">Plastid</keyword>
<keyword id="KW-0804">Transcription</keyword>
<keyword id="KW-0808">Transferase</keyword>